<organism>
    <name type="scientific">Kineococcus radiotolerans (strain ATCC BAA-149 / DSM 14245 / SRS30216)</name>
    <dbReference type="NCBI Taxonomy" id="266940"/>
    <lineage>
        <taxon>Bacteria</taxon>
        <taxon>Bacillati</taxon>
        <taxon>Actinomycetota</taxon>
        <taxon>Actinomycetes</taxon>
        <taxon>Kineosporiales</taxon>
        <taxon>Kineosporiaceae</taxon>
        <taxon>Kineococcus</taxon>
    </lineage>
</organism>
<keyword id="KW-0068">Autocatalytic cleavage</keyword>
<keyword id="KW-0963">Cytoplasm</keyword>
<keyword id="KW-0378">Hydrolase</keyword>
<keyword id="KW-0645">Protease</keyword>
<keyword id="KW-0647">Proteasome</keyword>
<keyword id="KW-1185">Reference proteome</keyword>
<keyword id="KW-0888">Threonine protease</keyword>
<keyword id="KW-0865">Zymogen</keyword>
<evidence type="ECO:0000255" key="1">
    <source>
        <dbReference type="HAMAP-Rule" id="MF_02113"/>
    </source>
</evidence>
<evidence type="ECO:0000256" key="2">
    <source>
        <dbReference type="SAM" id="MobiDB-lite"/>
    </source>
</evidence>
<proteinExistence type="inferred from homology"/>
<gene>
    <name evidence="1" type="primary">prcB</name>
    <name type="ordered locus">Krad_1873</name>
</gene>
<sequence>MAGRVREVSHSSDQSGRLPAAFLRPGSSSFTDFVREYSPEILPATRTLPAAAALPGGGPGAGEPPHATTIVALVFADGVVMAGDRRATAGPMIAQRDIQKVFQTDEHSCAGIAGTAGLAVEMIRLFQVELEHFEKLEGTLMSFEGKANRLSTMIRANLGMAMQGLAVVPLFAGYDLDAGRGRIVGYDITGGRSEEHDHHTVGSGSLFARGSLKKLYRPGMSEAETVRVALEALWDAADDDSATGGPDLLRKIWPVVGVTTAEGYRRVPDAELEPVVEAVVAGRRGNPGGNPGISAVHGDGGN</sequence>
<protein>
    <recommendedName>
        <fullName evidence="1">Proteasome subunit beta</fullName>
        <ecNumber evidence="1">3.4.25.1</ecNumber>
    </recommendedName>
    <alternativeName>
        <fullName evidence="1">20S proteasome beta subunit</fullName>
    </alternativeName>
    <alternativeName>
        <fullName evidence="1">Proteasome core protein PrcB</fullName>
    </alternativeName>
</protein>
<name>PSB_KINRD</name>
<reference key="1">
    <citation type="journal article" date="2008" name="PLoS ONE">
        <title>Survival in nuclear waste, extreme resistance, and potential applications gleaned from the genome sequence of Kineococcus radiotolerans SRS30216.</title>
        <authorList>
            <person name="Bagwell C.E."/>
            <person name="Bhat S."/>
            <person name="Hawkins G.M."/>
            <person name="Smith B.W."/>
            <person name="Biswas T."/>
            <person name="Hoover T.R."/>
            <person name="Saunders E."/>
            <person name="Han C.S."/>
            <person name="Tsodikov O.V."/>
            <person name="Shimkets L.J."/>
        </authorList>
    </citation>
    <scope>NUCLEOTIDE SEQUENCE [LARGE SCALE GENOMIC DNA]</scope>
    <source>
        <strain>ATCC BAA-149 / DSM 14245 / SRS30216</strain>
    </source>
</reference>
<feature type="propeptide" id="PRO_0000397516" description="Removed in mature form; by autocatalysis" evidence="1">
    <location>
        <begin position="1"/>
        <end position="67"/>
    </location>
</feature>
<feature type="chain" id="PRO_0000397517" description="Proteasome subunit beta">
    <location>
        <begin position="68"/>
        <end position="302"/>
    </location>
</feature>
<feature type="region of interest" description="Disordered" evidence="2">
    <location>
        <begin position="1"/>
        <end position="21"/>
    </location>
</feature>
<feature type="region of interest" description="Disordered" evidence="2">
    <location>
        <begin position="283"/>
        <end position="302"/>
    </location>
</feature>
<feature type="compositionally biased region" description="Basic and acidic residues" evidence="2">
    <location>
        <begin position="1"/>
        <end position="10"/>
    </location>
</feature>
<feature type="active site" description="Nucleophile" evidence="1">
    <location>
        <position position="68"/>
    </location>
</feature>
<accession>A6W970</accession>
<comment type="function">
    <text evidence="1">Component of the proteasome core, a large protease complex with broad specificity involved in protein degradation.</text>
</comment>
<comment type="catalytic activity">
    <reaction evidence="1">
        <text>Cleavage of peptide bonds with very broad specificity.</text>
        <dbReference type="EC" id="3.4.25.1"/>
    </reaction>
</comment>
<comment type="activity regulation">
    <text evidence="1">The formation of the proteasomal ATPase ARC-20S proteasome complex, likely via the docking of the C-termini of ARC into the intersubunit pockets in the alpha-rings, may trigger opening of the gate for substrate entry. Interconversion between the open-gate and close-gate conformations leads to a dynamic regulation of the 20S proteasome proteolysis activity.</text>
</comment>
<comment type="pathway">
    <text evidence="1">Protein degradation; proteasomal Pup-dependent pathway.</text>
</comment>
<comment type="subunit">
    <text evidence="1">The 20S proteasome core is composed of 14 alpha and 14 beta subunits that assemble into four stacked heptameric rings, resulting in a barrel-shaped structure. The two inner rings, each composed of seven catalytic beta subunits, are sandwiched by two outer rings, each composed of seven alpha subunits. The catalytic chamber with the active sites is on the inside of the barrel. Has a gated structure, the ends of the cylinder being occluded by the N-termini of the alpha-subunits. Is capped by the proteasome-associated ATPase, ARC.</text>
</comment>
<comment type="subcellular location">
    <subcellularLocation>
        <location evidence="1">Cytoplasm</location>
    </subcellularLocation>
</comment>
<comment type="similarity">
    <text evidence="1">Belongs to the peptidase T1B family.</text>
</comment>
<dbReference type="EC" id="3.4.25.1" evidence="1"/>
<dbReference type="EMBL" id="CP000750">
    <property type="protein sequence ID" value="ABS03359.1"/>
    <property type="molecule type" value="Genomic_DNA"/>
</dbReference>
<dbReference type="SMR" id="A6W970"/>
<dbReference type="STRING" id="266940.Krad_1873"/>
<dbReference type="MEROPS" id="T01.005"/>
<dbReference type="KEGG" id="kra:Krad_1873"/>
<dbReference type="eggNOG" id="COG0638">
    <property type="taxonomic scope" value="Bacteria"/>
</dbReference>
<dbReference type="HOGENOM" id="CLU_035750_2_0_11"/>
<dbReference type="OrthoDB" id="5174038at2"/>
<dbReference type="UniPathway" id="UPA00997"/>
<dbReference type="Proteomes" id="UP000001116">
    <property type="component" value="Chromosome"/>
</dbReference>
<dbReference type="GO" id="GO:0005737">
    <property type="term" value="C:cytoplasm"/>
    <property type="evidence" value="ECO:0007669"/>
    <property type="project" value="UniProtKB-SubCell"/>
</dbReference>
<dbReference type="GO" id="GO:0019774">
    <property type="term" value="C:proteasome core complex, beta-subunit complex"/>
    <property type="evidence" value="ECO:0007669"/>
    <property type="project" value="UniProtKB-UniRule"/>
</dbReference>
<dbReference type="GO" id="GO:0004298">
    <property type="term" value="F:threonine-type endopeptidase activity"/>
    <property type="evidence" value="ECO:0007669"/>
    <property type="project" value="UniProtKB-UniRule"/>
</dbReference>
<dbReference type="GO" id="GO:0019941">
    <property type="term" value="P:modification-dependent protein catabolic process"/>
    <property type="evidence" value="ECO:0007669"/>
    <property type="project" value="UniProtKB-UniRule"/>
</dbReference>
<dbReference type="GO" id="GO:0010498">
    <property type="term" value="P:proteasomal protein catabolic process"/>
    <property type="evidence" value="ECO:0007669"/>
    <property type="project" value="UniProtKB-UniRule"/>
</dbReference>
<dbReference type="CDD" id="cd01906">
    <property type="entry name" value="proteasome_protease_HslV"/>
    <property type="match status" value="1"/>
</dbReference>
<dbReference type="Gene3D" id="3.60.20.10">
    <property type="entry name" value="Glutamine Phosphoribosylpyrophosphate, subunit 1, domain 1"/>
    <property type="match status" value="1"/>
</dbReference>
<dbReference type="HAMAP" id="MF_02113_B">
    <property type="entry name" value="Proteasome_B_B"/>
    <property type="match status" value="1"/>
</dbReference>
<dbReference type="InterPro" id="IPR029055">
    <property type="entry name" value="Ntn_hydrolases_N"/>
</dbReference>
<dbReference type="InterPro" id="IPR000243">
    <property type="entry name" value="Pept_T1A_subB"/>
</dbReference>
<dbReference type="InterPro" id="IPR001353">
    <property type="entry name" value="Proteasome_sua/b"/>
</dbReference>
<dbReference type="InterPro" id="IPR023333">
    <property type="entry name" value="Proteasome_suB-type"/>
</dbReference>
<dbReference type="InterPro" id="IPR022483">
    <property type="entry name" value="PSB_actinobac"/>
</dbReference>
<dbReference type="NCBIfam" id="TIGR03690">
    <property type="entry name" value="20S_bact_beta"/>
    <property type="match status" value="1"/>
</dbReference>
<dbReference type="PANTHER" id="PTHR32194:SF0">
    <property type="entry name" value="ATP-DEPENDENT PROTEASE SUBUNIT HSLV"/>
    <property type="match status" value="1"/>
</dbReference>
<dbReference type="PANTHER" id="PTHR32194">
    <property type="entry name" value="METALLOPROTEASE TLDD"/>
    <property type="match status" value="1"/>
</dbReference>
<dbReference type="Pfam" id="PF00227">
    <property type="entry name" value="Proteasome"/>
    <property type="match status" value="1"/>
</dbReference>
<dbReference type="PRINTS" id="PR00141">
    <property type="entry name" value="PROTEASOME"/>
</dbReference>
<dbReference type="SUPFAM" id="SSF56235">
    <property type="entry name" value="N-terminal nucleophile aminohydrolases (Ntn hydrolases)"/>
    <property type="match status" value="1"/>
</dbReference>
<dbReference type="PROSITE" id="PS51476">
    <property type="entry name" value="PROTEASOME_BETA_2"/>
    <property type="match status" value="1"/>
</dbReference>